<comment type="similarity">
    <text evidence="1">Belongs to the eukaryotic ribosomal protein eS4 family.</text>
</comment>
<sequence length="241" mass="26805">MANMGSRKHLKRFKAPKMWPIHKKEEVWTTKTSAGPHALEESIPLVMVLRDILGLAANSREAKIILNNSDVLVDGIPRKNHRFPVGFMDVISIPKINKTFRVLQDYKGRLVLKEIEEKDSTFKLVKILGKTTIKGGKTQLNLEGGRNIIADDDYKTGDVLLLNIPEQKISDSIKFEEGALGLITGGKHISEVGKIDEIKITQSSKSNTVLMETEEGSFLTLARYVFVVGQDKPVISLVGDN</sequence>
<accession>Q2NFW9</accession>
<evidence type="ECO:0000255" key="1">
    <source>
        <dbReference type="HAMAP-Rule" id="MF_00485"/>
    </source>
</evidence>
<evidence type="ECO:0000305" key="2"/>
<name>RS4E_METST</name>
<dbReference type="EMBL" id="CP000102">
    <property type="protein sequence ID" value="ABC57284.1"/>
    <property type="molecule type" value="Genomic_DNA"/>
</dbReference>
<dbReference type="RefSeq" id="WP_011406483.1">
    <property type="nucleotide sequence ID" value="NC_007681.1"/>
</dbReference>
<dbReference type="SMR" id="Q2NFW9"/>
<dbReference type="STRING" id="339860.Msp_0896"/>
<dbReference type="KEGG" id="mst:Msp_0896"/>
<dbReference type="eggNOG" id="arCOG04093">
    <property type="taxonomic scope" value="Archaea"/>
</dbReference>
<dbReference type="HOGENOM" id="CLU_060400_0_0_2"/>
<dbReference type="OrthoDB" id="372073at2157"/>
<dbReference type="Proteomes" id="UP000001931">
    <property type="component" value="Chromosome"/>
</dbReference>
<dbReference type="GO" id="GO:0022627">
    <property type="term" value="C:cytosolic small ribosomal subunit"/>
    <property type="evidence" value="ECO:0007669"/>
    <property type="project" value="TreeGrafter"/>
</dbReference>
<dbReference type="GO" id="GO:0019843">
    <property type="term" value="F:rRNA binding"/>
    <property type="evidence" value="ECO:0007669"/>
    <property type="project" value="UniProtKB-KW"/>
</dbReference>
<dbReference type="GO" id="GO:0003735">
    <property type="term" value="F:structural constituent of ribosome"/>
    <property type="evidence" value="ECO:0007669"/>
    <property type="project" value="InterPro"/>
</dbReference>
<dbReference type="GO" id="GO:0006412">
    <property type="term" value="P:translation"/>
    <property type="evidence" value="ECO:0007669"/>
    <property type="project" value="UniProtKB-UniRule"/>
</dbReference>
<dbReference type="CDD" id="cd06087">
    <property type="entry name" value="KOW_RPS4"/>
    <property type="match status" value="1"/>
</dbReference>
<dbReference type="CDD" id="cd00165">
    <property type="entry name" value="S4"/>
    <property type="match status" value="1"/>
</dbReference>
<dbReference type="FunFam" id="3.10.290.10:FF:000002">
    <property type="entry name" value="40S ribosomal protein S4"/>
    <property type="match status" value="1"/>
</dbReference>
<dbReference type="Gene3D" id="2.30.30.30">
    <property type="match status" value="1"/>
</dbReference>
<dbReference type="Gene3D" id="2.40.50.740">
    <property type="match status" value="1"/>
</dbReference>
<dbReference type="Gene3D" id="3.10.290.10">
    <property type="entry name" value="RNA-binding S4 domain"/>
    <property type="match status" value="1"/>
</dbReference>
<dbReference type="HAMAP" id="MF_00485">
    <property type="entry name" value="Ribosomal_eS4"/>
    <property type="match status" value="1"/>
</dbReference>
<dbReference type="InterPro" id="IPR014722">
    <property type="entry name" value="Rib_uL2_dom2"/>
</dbReference>
<dbReference type="InterPro" id="IPR000876">
    <property type="entry name" value="Ribosomal_eS4"/>
</dbReference>
<dbReference type="InterPro" id="IPR013845">
    <property type="entry name" value="Ribosomal_eS4_central_region"/>
</dbReference>
<dbReference type="InterPro" id="IPR038237">
    <property type="entry name" value="Ribosomal_eS4_central_sf"/>
</dbReference>
<dbReference type="InterPro" id="IPR041982">
    <property type="entry name" value="Ribosomal_eS4_KOW"/>
</dbReference>
<dbReference type="InterPro" id="IPR013843">
    <property type="entry name" value="Ribosomal_eS4_N"/>
</dbReference>
<dbReference type="InterPro" id="IPR018199">
    <property type="entry name" value="Ribosomal_eS4_N_CS"/>
</dbReference>
<dbReference type="InterPro" id="IPR036986">
    <property type="entry name" value="S4_RNA-bd_sf"/>
</dbReference>
<dbReference type="NCBIfam" id="NF003312">
    <property type="entry name" value="PRK04313.1"/>
    <property type="match status" value="1"/>
</dbReference>
<dbReference type="PANTHER" id="PTHR11581">
    <property type="entry name" value="30S/40S RIBOSOMAL PROTEIN S4"/>
    <property type="match status" value="1"/>
</dbReference>
<dbReference type="PANTHER" id="PTHR11581:SF0">
    <property type="entry name" value="SMALL RIBOSOMAL SUBUNIT PROTEIN ES4"/>
    <property type="match status" value="1"/>
</dbReference>
<dbReference type="Pfam" id="PF00900">
    <property type="entry name" value="Ribosomal_S4e"/>
    <property type="match status" value="1"/>
</dbReference>
<dbReference type="Pfam" id="PF08071">
    <property type="entry name" value="RS4NT"/>
    <property type="match status" value="1"/>
</dbReference>
<dbReference type="PIRSF" id="PIRSF002116">
    <property type="entry name" value="Ribosomal_S4"/>
    <property type="match status" value="1"/>
</dbReference>
<dbReference type="SUPFAM" id="SSF55174">
    <property type="entry name" value="Alpha-L RNA-binding motif"/>
    <property type="match status" value="1"/>
</dbReference>
<dbReference type="PROSITE" id="PS00528">
    <property type="entry name" value="RIBOSOMAL_S4E"/>
    <property type="match status" value="1"/>
</dbReference>
<dbReference type="PROSITE" id="PS50889">
    <property type="entry name" value="S4"/>
    <property type="match status" value="1"/>
</dbReference>
<keyword id="KW-1185">Reference proteome</keyword>
<keyword id="KW-0687">Ribonucleoprotein</keyword>
<keyword id="KW-0689">Ribosomal protein</keyword>
<keyword id="KW-0694">RNA-binding</keyword>
<keyword id="KW-0699">rRNA-binding</keyword>
<feature type="chain" id="PRO_1000081343" description="Small ribosomal subunit protein eS4">
    <location>
        <begin position="1"/>
        <end position="241"/>
    </location>
</feature>
<feature type="domain" description="S4 RNA-binding" evidence="1">
    <location>
        <begin position="43"/>
        <end position="105"/>
    </location>
</feature>
<proteinExistence type="inferred from homology"/>
<organism>
    <name type="scientific">Methanosphaera stadtmanae (strain ATCC 43021 / DSM 3091 / JCM 11832 / MCB-3)</name>
    <dbReference type="NCBI Taxonomy" id="339860"/>
    <lineage>
        <taxon>Archaea</taxon>
        <taxon>Methanobacteriati</taxon>
        <taxon>Methanobacteriota</taxon>
        <taxon>Methanomada group</taxon>
        <taxon>Methanobacteria</taxon>
        <taxon>Methanobacteriales</taxon>
        <taxon>Methanobacteriaceae</taxon>
        <taxon>Methanosphaera</taxon>
    </lineage>
</organism>
<protein>
    <recommendedName>
        <fullName evidence="1">Small ribosomal subunit protein eS4</fullName>
    </recommendedName>
    <alternativeName>
        <fullName evidence="2">30S ribosomal protein S4e</fullName>
    </alternativeName>
</protein>
<gene>
    <name evidence="1" type="primary">rps4e</name>
    <name type="ordered locus">Msp_0896</name>
</gene>
<reference key="1">
    <citation type="journal article" date="2006" name="J. Bacteriol.">
        <title>The genome sequence of Methanosphaera stadtmanae reveals why this human intestinal archaeon is restricted to methanol and H2 for methane formation and ATP synthesis.</title>
        <authorList>
            <person name="Fricke W.F."/>
            <person name="Seedorf H."/>
            <person name="Henne A."/>
            <person name="Kruer M."/>
            <person name="Liesegang H."/>
            <person name="Hedderich R."/>
            <person name="Gottschalk G."/>
            <person name="Thauer R.K."/>
        </authorList>
    </citation>
    <scope>NUCLEOTIDE SEQUENCE [LARGE SCALE GENOMIC DNA]</scope>
    <source>
        <strain>ATCC 43021 / DSM 3091 / JCM 11832 / MCB-3</strain>
    </source>
</reference>